<accession>Q8NMU4</accession>
<protein>
    <recommendedName>
        <fullName evidence="1">Pyridinium-3,5-bisthiocarboxylic acid mononucleotide nickel insertion protein</fullName>
        <shortName evidence="1">P2TMN nickel insertion protein</shortName>
        <ecNumber evidence="1">4.99.1.12</ecNumber>
    </recommendedName>
    <alternativeName>
        <fullName evidence="1">Nickel-pincer cofactor biosynthesis protein LarC</fullName>
    </alternativeName>
</protein>
<gene>
    <name evidence="1" type="primary">larC</name>
    <name type="ordered locus">Cgl2470</name>
    <name type="ordered locus">cg2715</name>
</gene>
<sequence length="394" mass="42353">MGLWIDATAGVAGDMLLGALIDAGAELEKIQQVVEAVIPGDVLLRTEEVVRQGQRGIKLHVDAQHEHHHHRHLSTIKELLVNADIPEQTKQDALGVFELIAIAEGKVHGIEPEKIHFHEVGAWDSIADIVGVCEAIRQLNPGLIAASPIALGFGRIKAAHGDIPVPVPAVAELVKGWPTQTGALMESTEPVGELATPTGVALIRHFATQDGPFPGGIINEVGIGAGTKDTEGRPNIVRAILFNTSRSNPDTRTLVQLEANVDDQDPRLWPGVIEILFAAGAVDAWLTPILMKKGRPAHRVSALVDSSEVEAVKTALFAATTTFGIRSWEVEREGLDRRFEQVEVDGHTINIKIGSRDDQVISAQSEFEDIRSAAVALGISEREVVARIPQGTTE</sequence>
<evidence type="ECO:0000255" key="1">
    <source>
        <dbReference type="HAMAP-Rule" id="MF_01074"/>
    </source>
</evidence>
<reference key="1">
    <citation type="journal article" date="2003" name="Appl. Microbiol. Biotechnol.">
        <title>The Corynebacterium glutamicum genome: features and impacts on biotechnological processes.</title>
        <authorList>
            <person name="Ikeda M."/>
            <person name="Nakagawa S."/>
        </authorList>
    </citation>
    <scope>NUCLEOTIDE SEQUENCE [LARGE SCALE GENOMIC DNA]</scope>
    <source>
        <strain>ATCC 13032 / DSM 20300 / JCM 1318 / BCRC 11384 / CCUG 27702 / LMG 3730 / NBRC 12168 / NCIMB 10025 / NRRL B-2784 / 534</strain>
    </source>
</reference>
<reference key="2">
    <citation type="journal article" date="2003" name="J. Biotechnol.">
        <title>The complete Corynebacterium glutamicum ATCC 13032 genome sequence and its impact on the production of L-aspartate-derived amino acids and vitamins.</title>
        <authorList>
            <person name="Kalinowski J."/>
            <person name="Bathe B."/>
            <person name="Bartels D."/>
            <person name="Bischoff N."/>
            <person name="Bott M."/>
            <person name="Burkovski A."/>
            <person name="Dusch N."/>
            <person name="Eggeling L."/>
            <person name="Eikmanns B.J."/>
            <person name="Gaigalat L."/>
            <person name="Goesmann A."/>
            <person name="Hartmann M."/>
            <person name="Huthmacher K."/>
            <person name="Kraemer R."/>
            <person name="Linke B."/>
            <person name="McHardy A.C."/>
            <person name="Meyer F."/>
            <person name="Moeckel B."/>
            <person name="Pfefferle W."/>
            <person name="Puehler A."/>
            <person name="Rey D.A."/>
            <person name="Rueckert C."/>
            <person name="Rupp O."/>
            <person name="Sahm H."/>
            <person name="Wendisch V.F."/>
            <person name="Wiegraebe I."/>
            <person name="Tauch A."/>
        </authorList>
    </citation>
    <scope>NUCLEOTIDE SEQUENCE [LARGE SCALE GENOMIC DNA]</scope>
    <source>
        <strain>ATCC 13032 / DSM 20300 / JCM 1318 / BCRC 11384 / CCUG 27702 / LMG 3730 / NBRC 12168 / NCIMB 10025 / NRRL B-2784 / 534</strain>
    </source>
</reference>
<feature type="chain" id="PRO_0000146845" description="Pyridinium-3,5-bisthiocarboxylic acid mononucleotide nickel insertion protein">
    <location>
        <begin position="1"/>
        <end position="394"/>
    </location>
</feature>
<proteinExistence type="inferred from homology"/>
<organism>
    <name type="scientific">Corynebacterium glutamicum (strain ATCC 13032 / DSM 20300 / JCM 1318 / BCRC 11384 / CCUG 27702 / LMG 3730 / NBRC 12168 / NCIMB 10025 / NRRL B-2784 / 534)</name>
    <dbReference type="NCBI Taxonomy" id="196627"/>
    <lineage>
        <taxon>Bacteria</taxon>
        <taxon>Bacillati</taxon>
        <taxon>Actinomycetota</taxon>
        <taxon>Actinomycetes</taxon>
        <taxon>Mycobacteriales</taxon>
        <taxon>Corynebacteriaceae</taxon>
        <taxon>Corynebacterium</taxon>
    </lineage>
</organism>
<comment type="function">
    <text evidence="1">Involved in the biosynthesis of a nickel-pincer cofactor ((SCS)Ni(II) pincer complex). Binds Ni(2+), and functions in nickel delivery to pyridinium-3,5-bisthiocarboxylic acid mononucleotide (P2TMN), to form the mature cofactor. Is thus probably required for the activation of nickel-pincer cofactor-dependent enzymes.</text>
</comment>
<comment type="catalytic activity">
    <reaction evidence="1">
        <text>Ni(II)-pyridinium-3,5-bisthiocarboxylate mononucleotide = pyridinium-3,5-bisthiocarboxylate mononucleotide + Ni(2+)</text>
        <dbReference type="Rhea" id="RHEA:54784"/>
        <dbReference type="ChEBI" id="CHEBI:49786"/>
        <dbReference type="ChEBI" id="CHEBI:137372"/>
        <dbReference type="ChEBI" id="CHEBI:137373"/>
        <dbReference type="EC" id="4.99.1.12"/>
    </reaction>
</comment>
<comment type="similarity">
    <text evidence="1">Belongs to the LarC family.</text>
</comment>
<name>LARC_CORGL</name>
<dbReference type="EC" id="4.99.1.12" evidence="1"/>
<dbReference type="EMBL" id="BA000036">
    <property type="protein sequence ID" value="BAB99863.1"/>
    <property type="molecule type" value="Genomic_DNA"/>
</dbReference>
<dbReference type="EMBL" id="BX927155">
    <property type="protein sequence ID" value="CAF21132.1"/>
    <property type="molecule type" value="Genomic_DNA"/>
</dbReference>
<dbReference type="RefSeq" id="NP_601670.1">
    <property type="nucleotide sequence ID" value="NC_003450.3"/>
</dbReference>
<dbReference type="RefSeq" id="WP_011015146.1">
    <property type="nucleotide sequence ID" value="NC_006958.1"/>
</dbReference>
<dbReference type="SMR" id="Q8NMU4"/>
<dbReference type="STRING" id="196627.cg2715"/>
<dbReference type="GeneID" id="1020416"/>
<dbReference type="KEGG" id="cgb:cg2715"/>
<dbReference type="KEGG" id="cgl:Cgl2470"/>
<dbReference type="PATRIC" id="fig|196627.13.peg.2402"/>
<dbReference type="eggNOG" id="COG1641">
    <property type="taxonomic scope" value="Bacteria"/>
</dbReference>
<dbReference type="HOGENOM" id="CLU_028523_2_1_11"/>
<dbReference type="OrthoDB" id="9765625at2"/>
<dbReference type="BioCyc" id="CORYNE:G18NG-12071-MONOMER"/>
<dbReference type="Proteomes" id="UP000000582">
    <property type="component" value="Chromosome"/>
</dbReference>
<dbReference type="Proteomes" id="UP000001009">
    <property type="component" value="Chromosome"/>
</dbReference>
<dbReference type="GO" id="GO:0016829">
    <property type="term" value="F:lyase activity"/>
    <property type="evidence" value="ECO:0007669"/>
    <property type="project" value="UniProtKB-UniRule"/>
</dbReference>
<dbReference type="GO" id="GO:0016151">
    <property type="term" value="F:nickel cation binding"/>
    <property type="evidence" value="ECO:0007669"/>
    <property type="project" value="UniProtKB-UniRule"/>
</dbReference>
<dbReference type="GO" id="GO:0051604">
    <property type="term" value="P:protein maturation"/>
    <property type="evidence" value="ECO:0007669"/>
    <property type="project" value="UniProtKB-UniRule"/>
</dbReference>
<dbReference type="Gene3D" id="3.10.20.300">
    <property type="entry name" value="mk0293 like domain"/>
    <property type="match status" value="1"/>
</dbReference>
<dbReference type="Gene3D" id="3.30.70.1380">
    <property type="entry name" value="Transcriptional regulatory protein pf0864 domain like"/>
    <property type="match status" value="1"/>
</dbReference>
<dbReference type="HAMAP" id="MF_01074">
    <property type="entry name" value="LarC"/>
    <property type="match status" value="1"/>
</dbReference>
<dbReference type="InterPro" id="IPR002822">
    <property type="entry name" value="Ni_insertion"/>
</dbReference>
<dbReference type="NCBIfam" id="TIGR00299">
    <property type="entry name" value="nickel pincer cofactor biosynthesis protein LarC"/>
    <property type="match status" value="1"/>
</dbReference>
<dbReference type="PANTHER" id="PTHR36566">
    <property type="entry name" value="NICKEL INSERTION PROTEIN-RELATED"/>
    <property type="match status" value="1"/>
</dbReference>
<dbReference type="PANTHER" id="PTHR36566:SF1">
    <property type="entry name" value="PYRIDINIUM-3,5-BISTHIOCARBOXYLIC ACID MONONUCLEOTIDE NICKEL INSERTION PROTEIN"/>
    <property type="match status" value="1"/>
</dbReference>
<dbReference type="Pfam" id="PF01969">
    <property type="entry name" value="Ni_insertion"/>
    <property type="match status" value="1"/>
</dbReference>
<keyword id="KW-0456">Lyase</keyword>
<keyword id="KW-0533">Nickel</keyword>
<keyword id="KW-1185">Reference proteome</keyword>